<gene>
    <name evidence="21" type="primary">Asun</name>
    <name evidence="15 16" type="synonym">IntS13</name>
    <name evidence="13" type="synonym">Mat89Bb</name>
    <name evidence="18" type="synonym">ovary2</name>
    <name evidence="21" type="ORF">CG6814</name>
</gene>
<comment type="function">
    <text evidence="4 5 6 7 9">Component of the integrator complex, a multiprotein complex that terminates RNA polymerase II (Pol II) transcription in the promoter-proximal region of genes (PubMed:23097424, PubMed:32966759). The integrator complex provides a quality checkpoint during transcription elongation by driving premature transcription termination of transcripts that are unfavorably configured for transcriptional elongation: the complex terminates transcription by (1) catalyzing dephosphorylation of the C-terminal domain (CTD) of Pol II subunit Polr2A/Rbp1 and Spt5, and (2) degrading the exiting nascent RNA transcript via endonuclease activity (PubMed:32966759). The integrator complex is also involved in the 3'-end processing of the U7 snRNA, and also the spliceosomal snRNAs U1, U2, U4 and U5 (PubMed:23097424). Plays a role as a regulator of spermatogenesis (PubMed:19357193). Crucial regulator of the mitotic cell cycle and development (PubMed:15737938, PubMed:19357193). Required for the correct dynein-dynactin perinuclear localization important for nucleus-centrosome coupling that occur upon meiotic progression of primary spermatocytes (PubMed:19357193, PubMed:23904267). Plays a role in sperm motility and fertility (PubMed:19357193). May have a role in the PNG/PLU/GNU pathway (PubMed:15737938).</text>
</comment>
<comment type="subunit">
    <text evidence="6 8 9 10 11">Belongs to the multiprotein complex Integrator, at least composed of IntS1, IntS2, IntS3, IntS4, omd/IntS5, IntS6, defl/IntS7, IntS8, IntS9, IntS10, IntS11, IntS12, asun/IntS13, IntS14 and IntS15 (PubMed:23097424, PubMed:31530651, PubMed:32966759, PubMed:37995689, PubMed:39032490). The core complex associates with protein phosphatase 2A subunits mts/PP2A and Pp2A-29B, to form the Integrator-PP2A (INTAC) complex (PubMed:32966759, PubMed:37995689).</text>
</comment>
<comment type="subcellular location">
    <subcellularLocation>
        <location evidence="5 6 11">Nucleus</location>
    </subcellularLocation>
    <subcellularLocation>
        <location evidence="5 6 12">Cytoplasm</location>
    </subcellularLocation>
    <subcellularLocation>
        <location evidence="5">Cytoplasm</location>
        <location evidence="5">Perinuclear region</location>
    </subcellularLocation>
    <text evidence="5 7">Colocalizes with dynein-dynactin on the nuclear surface at the meiotic G2/prophase transition in primary spermatocytes (PubMed:19357193). Nuclear location is required for recruitment of dynein motors to nuclear envelope at G2/M (PubMed:23904267).</text>
</comment>
<comment type="tissue specificity">
    <text evidence="12">Expressed in nurse cells at stages 9-10 of oogenesis and exported to the oocyte. Also expressed in the follicle cells surrounding the oocyte.</text>
</comment>
<comment type="developmental stage">
    <text evidence="12">Expressed both maternally and zygotically. Expressed in the nucleus during the G2 phase of primary spermatocytes at stages S3-S4. Distributed between the nucleus and the cytoplasm in G2 phase of primary spermatocytes at stage S5. Localized in the cytoplasm in G2 phase of primary spermatocytes at stage S6. Remains dispersed throughout the cell until the completion of meiosis when it becomes restricted from nuclei of onion-stage spermatides.</text>
</comment>
<comment type="PTM">
    <text evidence="4">Phosphorylated.</text>
</comment>
<comment type="disruption phenotype">
    <text evidence="4">Results in almost complete steril males. Mature sperm formed in small amounts in testes are immotile or weakly motile; seminal vesicles are largely empty. Primary spermatocytes appeared normal (Cysts of 16 cells); however, spermatids show irregularities in nuclear size and number. Spermatocytes I exhibit failure of nucleus-centrosome coupling that normally occur upon meiotic phase entry; those that progress through meiotic divisions exhibit defects in spindle assembly and chromosome segregation. When injected into Xenopus embryos, causes developmental arrest with gastrulation defects and defective cell cycles resulting in polyploid nuclei. RNAi injection into HeLa cells or Drosophila syncytial embryos causes mitotic cell cycle, giving rise to multinucleated polyploidy cells.</text>
</comment>
<comment type="similarity">
    <text evidence="17">Belongs to the Integrator subunit 13 family.</text>
</comment>
<comment type="sequence caution" evidence="17">
    <conflict type="erroneous gene model prediction">
        <sequence resource="EMBL-CDS" id="AAA90969"/>
    </conflict>
</comment>
<comment type="sequence caution" evidence="17">
    <conflict type="frameshift">
        <sequence resource="EMBL-CDS" id="AAA90969"/>
    </conflict>
</comment>
<comment type="sequence caution" evidence="17">
    <conflict type="erroneous termination">
        <sequence resource="EMBL-CDS" id="AAA90971"/>
    </conflict>
    <text>Truncated C-terminus.</text>
</comment>
<comment type="sequence caution" evidence="17">
    <conflict type="frameshift">
        <sequence resource="EMBL-CDS" id="AAA90971"/>
    </conflict>
</comment>
<accession>Q9VEX5</accession>
<accession>Q27924</accession>
<accession>Q7JP08</accession>
<sequence length="689" mass="75728">MFERNQKTIFVLDHTRYFSIASEEYISMDFLKGKPSADGGATGAAGNATGSGGSQFSKSLWTCACESSIEYCRVVWDLFPGKKHVRFIVSDTAAHIVNTWRPSTQNMAHVMNAMLIVGVPSRNVPTSSDYSVIHGLRAAIEALAEPTDEQLAAMADFGTDELPRIPNKGRVICITSARDNTSMKSLEDIFNTVLVQQNTLAAPPSKKGLVIDHCHLVILNIVPLGVESLVTNRSLLKISPLLDVEIHTVSAPDISYKLTHLILNHYDLASTTVTNIPMKEEQNANSSANYDVEILHSRRAHSITCGPDFSLPTSIKQGATYETVTLKWCTPRGCGSADLQPCLGQFLVTPVDVTSRPSSCLINFLLNGRSVLLEMPRKTGSKATSHMLSARGGEIFVHSLCITRSCMDEAPSITDGPGGRVSDYRTAELGQLIKMSRVVPLKVKDPSAPPLTRRLPRYFPLTTSSSILFHLQRHISWLPHFLHLLVKEDMDKQDEVRCQQHIHELYKSASRGDVLPFTHTNGARLKLSKAKDQYRLLYRELEQLIQLNATTMHHKNLLESLQSLRAAYGDAPLKSEPGASLLRTYTESPLSPERLEPISSVGASGSSSSNSLLKASKRRMSSCGQRSLLDIISSAERSQSNKRLDFSGRLCTPLGQVAKLYPDFGTKDKDTVTTGASITPNVKEESVRS</sequence>
<protein>
    <recommendedName>
        <fullName evidence="14">Protein asunder</fullName>
    </recommendedName>
    <alternativeName>
        <fullName evidence="13">Cell cycle regulator Mat89Bb</fullName>
    </alternativeName>
    <alternativeName>
        <fullName evidence="15">Integrator complex subunit 13</fullName>
    </alternativeName>
    <alternativeName>
        <fullName evidence="19">Maternal transcript 89Bb</fullName>
    </alternativeName>
    <alternativeName>
        <fullName evidence="14">Set apart in position or space protein</fullName>
    </alternativeName>
</protein>
<dbReference type="EMBL" id="U47618">
    <property type="protein sequence ID" value="AAA90969.1"/>
    <property type="status" value="ALT_SEQ"/>
    <property type="molecule type" value="Genomic_DNA"/>
</dbReference>
<dbReference type="EMBL" id="U47619">
    <property type="protein sequence ID" value="AAA90971.1"/>
    <property type="status" value="ALT_SEQ"/>
    <property type="molecule type" value="mRNA"/>
</dbReference>
<dbReference type="EMBL" id="AE014297">
    <property type="protein sequence ID" value="AAF55290.1"/>
    <property type="molecule type" value="Genomic_DNA"/>
</dbReference>
<dbReference type="EMBL" id="AY118550">
    <property type="protein sequence ID" value="AAM49919.1"/>
    <property type="molecule type" value="mRNA"/>
</dbReference>
<dbReference type="RefSeq" id="NP_524379.2">
    <property type="nucleotide sequence ID" value="NM_079655.4"/>
</dbReference>
<dbReference type="SMR" id="Q9VEX5"/>
<dbReference type="BioGRID" id="67019">
    <property type="interactions" value="8"/>
</dbReference>
<dbReference type="FunCoup" id="Q9VEX5">
    <property type="interactions" value="2343"/>
</dbReference>
<dbReference type="IntAct" id="Q9VEX5">
    <property type="interactions" value="1"/>
</dbReference>
<dbReference type="STRING" id="7227.FBpp0082713"/>
<dbReference type="PaxDb" id="7227-FBpp0082713"/>
<dbReference type="DNASU" id="41971"/>
<dbReference type="EnsemblMetazoa" id="FBtr0083259">
    <property type="protein sequence ID" value="FBpp0082713"/>
    <property type="gene ID" value="FBgn0020407"/>
</dbReference>
<dbReference type="GeneID" id="41971"/>
<dbReference type="KEGG" id="dme:Dmel_CG6814"/>
<dbReference type="UCSC" id="CG6814-RA">
    <property type="organism name" value="d. melanogaster"/>
</dbReference>
<dbReference type="AGR" id="FB:FBgn0020407"/>
<dbReference type="CTD" id="41971"/>
<dbReference type="FlyBase" id="FBgn0020407">
    <property type="gene designation" value="asun"/>
</dbReference>
<dbReference type="VEuPathDB" id="VectorBase:FBgn0020407"/>
<dbReference type="eggNOG" id="KOG3711">
    <property type="taxonomic scope" value="Eukaryota"/>
</dbReference>
<dbReference type="GeneTree" id="ENSGT00390000002793"/>
<dbReference type="HOGENOM" id="CLU_012654_1_0_1"/>
<dbReference type="InParanoid" id="Q9VEX5"/>
<dbReference type="OMA" id="NCTAMHR"/>
<dbReference type="OrthoDB" id="5844105at2759"/>
<dbReference type="PhylomeDB" id="Q9VEX5"/>
<dbReference type="Reactome" id="R-DME-6807505">
    <property type="pathway name" value="RNA polymerase II transcribes snRNA genes"/>
</dbReference>
<dbReference type="BioGRID-ORCS" id="41971">
    <property type="hits" value="1 hit in 1 CRISPR screen"/>
</dbReference>
<dbReference type="GenomeRNAi" id="41971"/>
<dbReference type="PRO" id="PR:Q9VEX5"/>
<dbReference type="Proteomes" id="UP000000803">
    <property type="component" value="Chromosome 3R"/>
</dbReference>
<dbReference type="Bgee" id="FBgn0020407">
    <property type="expression patterns" value="Expressed in egg cell and 23 other cell types or tissues"/>
</dbReference>
<dbReference type="GO" id="GO:0005737">
    <property type="term" value="C:cytoplasm"/>
    <property type="evidence" value="ECO:0000314"/>
    <property type="project" value="UniProtKB"/>
</dbReference>
<dbReference type="GO" id="GO:0160232">
    <property type="term" value="C:INTAC complex"/>
    <property type="evidence" value="ECO:0000314"/>
    <property type="project" value="UniProtKB"/>
</dbReference>
<dbReference type="GO" id="GO:0032039">
    <property type="term" value="C:integrator complex"/>
    <property type="evidence" value="ECO:0000314"/>
    <property type="project" value="UniProtKB"/>
</dbReference>
<dbReference type="GO" id="GO:0005634">
    <property type="term" value="C:nucleus"/>
    <property type="evidence" value="ECO:0000314"/>
    <property type="project" value="FlyBase"/>
</dbReference>
<dbReference type="GO" id="GO:0048471">
    <property type="term" value="C:perinuclear region of cytoplasm"/>
    <property type="evidence" value="ECO:0007669"/>
    <property type="project" value="UniProtKB-SubCell"/>
</dbReference>
<dbReference type="GO" id="GO:0051301">
    <property type="term" value="P:cell division"/>
    <property type="evidence" value="ECO:0007669"/>
    <property type="project" value="UniProtKB-KW"/>
</dbReference>
<dbReference type="GO" id="GO:0051642">
    <property type="term" value="P:centrosome localization"/>
    <property type="evidence" value="ECO:0000315"/>
    <property type="project" value="FlyBase"/>
</dbReference>
<dbReference type="GO" id="GO:0046843">
    <property type="term" value="P:dorsal appendage formation"/>
    <property type="evidence" value="ECO:0000315"/>
    <property type="project" value="FlyBase"/>
</dbReference>
<dbReference type="GO" id="GO:0030317">
    <property type="term" value="P:flagellated sperm motility"/>
    <property type="evidence" value="ECO:0000315"/>
    <property type="project" value="UniProtKB"/>
</dbReference>
<dbReference type="GO" id="GO:0051321">
    <property type="term" value="P:meiotic cell cycle"/>
    <property type="evidence" value="ECO:0007669"/>
    <property type="project" value="UniProtKB-KW"/>
</dbReference>
<dbReference type="GO" id="GO:0051663">
    <property type="term" value="P:oocyte nucleus localization involved in oocyte dorsal/ventral axis specification"/>
    <property type="evidence" value="ECO:0000315"/>
    <property type="project" value="FlyBase"/>
</dbReference>
<dbReference type="GO" id="GO:0060814">
    <property type="term" value="P:posterior mRNA localization involved in anterior/posterior axis specification"/>
    <property type="evidence" value="ECO:0000315"/>
    <property type="project" value="FlyBase"/>
</dbReference>
<dbReference type="GO" id="GO:0080154">
    <property type="term" value="P:regulation of fertilization"/>
    <property type="evidence" value="ECO:0000315"/>
    <property type="project" value="UniProtKB"/>
</dbReference>
<dbReference type="GO" id="GO:0007346">
    <property type="term" value="P:regulation of mitotic cell cycle"/>
    <property type="evidence" value="ECO:0000315"/>
    <property type="project" value="UniProtKB"/>
</dbReference>
<dbReference type="GO" id="GO:0160240">
    <property type="term" value="P:RNA polymerase II transcription initiation surveillance"/>
    <property type="evidence" value="ECO:0000314"/>
    <property type="project" value="UniProtKB"/>
</dbReference>
<dbReference type="GO" id="GO:0034472">
    <property type="term" value="P:snRNA 3'-end processing"/>
    <property type="evidence" value="ECO:0000314"/>
    <property type="project" value="FlyBase"/>
</dbReference>
<dbReference type="GO" id="GO:0007283">
    <property type="term" value="P:spermatogenesis"/>
    <property type="evidence" value="ECO:0000315"/>
    <property type="project" value="FlyBase"/>
</dbReference>
<dbReference type="InterPro" id="IPR019355">
    <property type="entry name" value="Cell_cycle_regulator_Mat89Bb"/>
</dbReference>
<dbReference type="PANTHER" id="PTHR12955:SF1">
    <property type="entry name" value="INTEGRATOR COMPLEX SUBUNIT 13"/>
    <property type="match status" value="1"/>
</dbReference>
<dbReference type="PANTHER" id="PTHR12955">
    <property type="entry name" value="SARCOMA ANTIGEN NY-SAR-95-RELATED"/>
    <property type="match status" value="1"/>
</dbReference>
<dbReference type="Pfam" id="PF10221">
    <property type="entry name" value="Mat89Bb"/>
    <property type="match status" value="1"/>
</dbReference>
<evidence type="ECO:0000255" key="1"/>
<evidence type="ECO:0000256" key="2">
    <source>
        <dbReference type="SAM" id="MobiDB-lite"/>
    </source>
</evidence>
<evidence type="ECO:0000269" key="3">
    <source>
    </source>
</evidence>
<evidence type="ECO:0000269" key="4">
    <source>
    </source>
</evidence>
<evidence type="ECO:0000269" key="5">
    <source>
    </source>
</evidence>
<evidence type="ECO:0000269" key="6">
    <source>
    </source>
</evidence>
<evidence type="ECO:0000269" key="7">
    <source>
    </source>
</evidence>
<evidence type="ECO:0000269" key="8">
    <source>
    </source>
</evidence>
<evidence type="ECO:0000269" key="9">
    <source>
    </source>
</evidence>
<evidence type="ECO:0000269" key="10">
    <source>
    </source>
</evidence>
<evidence type="ECO:0000269" key="11">
    <source>
    </source>
</evidence>
<evidence type="ECO:0000269" key="12">
    <source>
    </source>
</evidence>
<evidence type="ECO:0000303" key="13">
    <source>
    </source>
</evidence>
<evidence type="ECO:0000303" key="14">
    <source>
    </source>
</evidence>
<evidence type="ECO:0000303" key="15">
    <source>
    </source>
</evidence>
<evidence type="ECO:0000303" key="16">
    <source>
    </source>
</evidence>
<evidence type="ECO:0000305" key="17"/>
<evidence type="ECO:0000312" key="18">
    <source>
        <dbReference type="EMBL" id="AAA90971.1"/>
    </source>
</evidence>
<evidence type="ECO:0000312" key="19">
    <source>
        <dbReference type="EMBL" id="AAF55290.1"/>
    </source>
</evidence>
<evidence type="ECO:0000312" key="20">
    <source>
        <dbReference type="EMBL" id="AAM49919.1"/>
    </source>
</evidence>
<evidence type="ECO:0000312" key="21">
    <source>
        <dbReference type="FlyBase" id="FBgn0020407"/>
    </source>
</evidence>
<name>INT13_DROME</name>
<organism>
    <name type="scientific">Drosophila melanogaster</name>
    <name type="common">Fruit fly</name>
    <dbReference type="NCBI Taxonomy" id="7227"/>
    <lineage>
        <taxon>Eukaryota</taxon>
        <taxon>Metazoa</taxon>
        <taxon>Ecdysozoa</taxon>
        <taxon>Arthropoda</taxon>
        <taxon>Hexapoda</taxon>
        <taxon>Insecta</taxon>
        <taxon>Pterygota</taxon>
        <taxon>Neoptera</taxon>
        <taxon>Endopterygota</taxon>
        <taxon>Diptera</taxon>
        <taxon>Brachycera</taxon>
        <taxon>Muscomorpha</taxon>
        <taxon>Ephydroidea</taxon>
        <taxon>Drosophilidae</taxon>
        <taxon>Drosophila</taxon>
        <taxon>Sophophora</taxon>
    </lineage>
</organism>
<proteinExistence type="evidence at protein level"/>
<feature type="chain" id="PRO_0000385342" description="Protein asunder">
    <location>
        <begin position="1"/>
        <end position="689"/>
    </location>
</feature>
<feature type="region of interest" description="Disordered" evidence="2">
    <location>
        <begin position="592"/>
        <end position="619"/>
    </location>
</feature>
<feature type="region of interest" description="Disordered" evidence="2">
    <location>
        <begin position="665"/>
        <end position="689"/>
    </location>
</feature>
<feature type="coiled-coil region" evidence="1">
    <location>
        <begin position="521"/>
        <end position="550"/>
    </location>
</feature>
<feature type="short sequence motif" description="Nuclear localization signal (NLS)" evidence="7">
    <location>
        <begin position="613"/>
        <end position="619"/>
    </location>
</feature>
<feature type="compositionally biased region" description="Low complexity" evidence="2">
    <location>
        <begin position="599"/>
        <end position="614"/>
    </location>
</feature>
<feature type="mutagenesis site" description="Loss of nuclear location. Location is mainly cytoplasmic or diffuse." evidence="7">
    <original>KRR</original>
    <variation>AAA</variation>
    <location>
        <begin position="617"/>
        <end position="619"/>
    </location>
</feature>
<feature type="sequence conflict" description="In Ref. 1; AAA90971." evidence="17" ref="1">
    <original>S</original>
    <variation>T</variation>
    <location>
        <position position="54"/>
    </location>
</feature>
<feature type="sequence conflict" description="In Ref. 1; AAA90971." evidence="17" ref="1">
    <original>TDEQL</original>
    <variation>PMSSW</variation>
    <location>
        <begin position="147"/>
        <end position="151"/>
    </location>
</feature>
<feature type="sequence conflict" description="In Ref. 1; AAA90971." evidence="17" ref="1">
    <original>T</original>
    <variation>S</variation>
    <location>
        <position position="199"/>
    </location>
</feature>
<feature type="sequence conflict" description="In Ref. 1; AAA90971." evidence="17" ref="1">
    <original>KL</original>
    <variation>NV</variation>
    <location>
        <begin position="257"/>
        <end position="258"/>
    </location>
</feature>
<feature type="sequence conflict" description="In Ref. 1; AAA90969/AAA90971." evidence="17" ref="1">
    <original>V</original>
    <variation>M</variation>
    <location>
        <position position="438"/>
    </location>
</feature>
<feature type="sequence conflict" description="In Ref. 1; AAA90969/AAA90971." evidence="17" ref="1">
    <original>G</original>
    <variation>V</variation>
    <location>
        <position position="602"/>
    </location>
</feature>
<keyword id="KW-0131">Cell cycle</keyword>
<keyword id="KW-0132">Cell division</keyword>
<keyword id="KW-0175">Coiled coil</keyword>
<keyword id="KW-0963">Cytoplasm</keyword>
<keyword id="KW-0217">Developmental protein</keyword>
<keyword id="KW-0221">Differentiation</keyword>
<keyword id="KW-0469">Meiosis</keyword>
<keyword id="KW-0498">Mitosis</keyword>
<keyword id="KW-0539">Nucleus</keyword>
<keyword id="KW-0597">Phosphoprotein</keyword>
<keyword id="KW-1185">Reference proteome</keyword>
<keyword id="KW-0744">Spermatogenesis</keyword>
<reference evidence="17 18" key="1">
    <citation type="journal article" date="1998" name="Dev. Genes Evol.">
        <title>A testis-specifically expressed gene is embedded within a cluster of maternally expressed genes at 89B in Drosophila melanogaster.</title>
        <authorList>
            <person name="Stebbings L.A."/>
            <person name="Grimes B.R."/>
            <person name="Bownes M."/>
        </authorList>
    </citation>
    <scope>NUCLEOTIDE SEQUENCE [MRNA]</scope>
    <scope>NUCLEOTIDE SEQUENCE [GENOMIC DNA] OF 413-689</scope>
    <scope>SUBCELLULAR LOCATION</scope>
    <scope>TISSUE SPECIFICITY</scope>
    <scope>DEVELOPMENTAL STAGE</scope>
</reference>
<reference evidence="19" key="2">
    <citation type="journal article" date="2000" name="Science">
        <title>The genome sequence of Drosophila melanogaster.</title>
        <authorList>
            <person name="Adams M.D."/>
            <person name="Celniker S.E."/>
            <person name="Holt R.A."/>
            <person name="Evans C.A."/>
            <person name="Gocayne J.D."/>
            <person name="Amanatides P.G."/>
            <person name="Scherer S.E."/>
            <person name="Li P.W."/>
            <person name="Hoskins R.A."/>
            <person name="Galle R.F."/>
            <person name="George R.A."/>
            <person name="Lewis S.E."/>
            <person name="Richards S."/>
            <person name="Ashburner M."/>
            <person name="Henderson S.N."/>
            <person name="Sutton G.G."/>
            <person name="Wortman J.R."/>
            <person name="Yandell M.D."/>
            <person name="Zhang Q."/>
            <person name="Chen L.X."/>
            <person name="Brandon R.C."/>
            <person name="Rogers Y.-H.C."/>
            <person name="Blazej R.G."/>
            <person name="Champe M."/>
            <person name="Pfeiffer B.D."/>
            <person name="Wan K.H."/>
            <person name="Doyle C."/>
            <person name="Baxter E.G."/>
            <person name="Helt G."/>
            <person name="Nelson C.R."/>
            <person name="Miklos G.L.G."/>
            <person name="Abril J.F."/>
            <person name="Agbayani A."/>
            <person name="An H.-J."/>
            <person name="Andrews-Pfannkoch C."/>
            <person name="Baldwin D."/>
            <person name="Ballew R.M."/>
            <person name="Basu A."/>
            <person name="Baxendale J."/>
            <person name="Bayraktaroglu L."/>
            <person name="Beasley E.M."/>
            <person name="Beeson K.Y."/>
            <person name="Benos P.V."/>
            <person name="Berman B.P."/>
            <person name="Bhandari D."/>
            <person name="Bolshakov S."/>
            <person name="Borkova D."/>
            <person name="Botchan M.R."/>
            <person name="Bouck J."/>
            <person name="Brokstein P."/>
            <person name="Brottier P."/>
            <person name="Burtis K.C."/>
            <person name="Busam D.A."/>
            <person name="Butler H."/>
            <person name="Cadieu E."/>
            <person name="Center A."/>
            <person name="Chandra I."/>
            <person name="Cherry J.M."/>
            <person name="Cawley S."/>
            <person name="Dahlke C."/>
            <person name="Davenport L.B."/>
            <person name="Davies P."/>
            <person name="de Pablos B."/>
            <person name="Delcher A."/>
            <person name="Deng Z."/>
            <person name="Mays A.D."/>
            <person name="Dew I."/>
            <person name="Dietz S.M."/>
            <person name="Dodson K."/>
            <person name="Doup L.E."/>
            <person name="Downes M."/>
            <person name="Dugan-Rocha S."/>
            <person name="Dunkov B.C."/>
            <person name="Dunn P."/>
            <person name="Durbin K.J."/>
            <person name="Evangelista C.C."/>
            <person name="Ferraz C."/>
            <person name="Ferriera S."/>
            <person name="Fleischmann W."/>
            <person name="Fosler C."/>
            <person name="Gabrielian A.E."/>
            <person name="Garg N.S."/>
            <person name="Gelbart W.M."/>
            <person name="Glasser K."/>
            <person name="Glodek A."/>
            <person name="Gong F."/>
            <person name="Gorrell J.H."/>
            <person name="Gu Z."/>
            <person name="Guan P."/>
            <person name="Harris M."/>
            <person name="Harris N.L."/>
            <person name="Harvey D.A."/>
            <person name="Heiman T.J."/>
            <person name="Hernandez J.R."/>
            <person name="Houck J."/>
            <person name="Hostin D."/>
            <person name="Houston K.A."/>
            <person name="Howland T.J."/>
            <person name="Wei M.-H."/>
            <person name="Ibegwam C."/>
            <person name="Jalali M."/>
            <person name="Kalush F."/>
            <person name="Karpen G.H."/>
            <person name="Ke Z."/>
            <person name="Kennison J.A."/>
            <person name="Ketchum K.A."/>
            <person name="Kimmel B.E."/>
            <person name="Kodira C.D."/>
            <person name="Kraft C.L."/>
            <person name="Kravitz S."/>
            <person name="Kulp D."/>
            <person name="Lai Z."/>
            <person name="Lasko P."/>
            <person name="Lei Y."/>
            <person name="Levitsky A.A."/>
            <person name="Li J.H."/>
            <person name="Li Z."/>
            <person name="Liang Y."/>
            <person name="Lin X."/>
            <person name="Liu X."/>
            <person name="Mattei B."/>
            <person name="McIntosh T.C."/>
            <person name="McLeod M.P."/>
            <person name="McPherson D."/>
            <person name="Merkulov G."/>
            <person name="Milshina N.V."/>
            <person name="Mobarry C."/>
            <person name="Morris J."/>
            <person name="Moshrefi A."/>
            <person name="Mount S.M."/>
            <person name="Moy M."/>
            <person name="Murphy B."/>
            <person name="Murphy L."/>
            <person name="Muzny D.M."/>
            <person name="Nelson D.L."/>
            <person name="Nelson D.R."/>
            <person name="Nelson K.A."/>
            <person name="Nixon K."/>
            <person name="Nusskern D.R."/>
            <person name="Pacleb J.M."/>
            <person name="Palazzolo M."/>
            <person name="Pittman G.S."/>
            <person name="Pan S."/>
            <person name="Pollard J."/>
            <person name="Puri V."/>
            <person name="Reese M.G."/>
            <person name="Reinert K."/>
            <person name="Remington K."/>
            <person name="Saunders R.D.C."/>
            <person name="Scheeler F."/>
            <person name="Shen H."/>
            <person name="Shue B.C."/>
            <person name="Siden-Kiamos I."/>
            <person name="Simpson M."/>
            <person name="Skupski M.P."/>
            <person name="Smith T.J."/>
            <person name="Spier E."/>
            <person name="Spradling A.C."/>
            <person name="Stapleton M."/>
            <person name="Strong R."/>
            <person name="Sun E."/>
            <person name="Svirskas R."/>
            <person name="Tector C."/>
            <person name="Turner R."/>
            <person name="Venter E."/>
            <person name="Wang A.H."/>
            <person name="Wang X."/>
            <person name="Wang Z.-Y."/>
            <person name="Wassarman D.A."/>
            <person name="Weinstock G.M."/>
            <person name="Weissenbach J."/>
            <person name="Williams S.M."/>
            <person name="Woodage T."/>
            <person name="Worley K.C."/>
            <person name="Wu D."/>
            <person name="Yang S."/>
            <person name="Yao Q.A."/>
            <person name="Ye J."/>
            <person name="Yeh R.-F."/>
            <person name="Zaveri J.S."/>
            <person name="Zhan M."/>
            <person name="Zhang G."/>
            <person name="Zhao Q."/>
            <person name="Zheng L."/>
            <person name="Zheng X.H."/>
            <person name="Zhong F.N."/>
            <person name="Zhong W."/>
            <person name="Zhou X."/>
            <person name="Zhu S.C."/>
            <person name="Zhu X."/>
            <person name="Smith H.O."/>
            <person name="Gibbs R.A."/>
            <person name="Myers E.W."/>
            <person name="Rubin G.M."/>
            <person name="Venter J.C."/>
        </authorList>
    </citation>
    <scope>NUCLEOTIDE SEQUENCE [LARGE SCALE GENOMIC DNA]</scope>
    <source>
        <strain>Berkeley</strain>
    </source>
</reference>
<reference evidence="17 19" key="3">
    <citation type="journal article" date="2002" name="Genome Biol.">
        <title>Annotation of the Drosophila melanogaster euchromatic genome: a systematic review.</title>
        <authorList>
            <person name="Misra S."/>
            <person name="Crosby M.A."/>
            <person name="Mungall C.J."/>
            <person name="Matthews B.B."/>
            <person name="Campbell K.S."/>
            <person name="Hradecky P."/>
            <person name="Huang Y."/>
            <person name="Kaminker J.S."/>
            <person name="Millburn G.H."/>
            <person name="Prochnik S.E."/>
            <person name="Smith C.D."/>
            <person name="Tupy J.L."/>
            <person name="Whitfield E.J."/>
            <person name="Bayraktaroglu L."/>
            <person name="Berman B.P."/>
            <person name="Bettencourt B.R."/>
            <person name="Celniker S.E."/>
            <person name="de Grey A.D.N.J."/>
            <person name="Drysdale R.A."/>
            <person name="Harris N.L."/>
            <person name="Richter J."/>
            <person name="Russo S."/>
            <person name="Schroeder A.J."/>
            <person name="Shu S.Q."/>
            <person name="Stapleton M."/>
            <person name="Yamada C."/>
            <person name="Ashburner M."/>
            <person name="Gelbart W.M."/>
            <person name="Rubin G.M."/>
            <person name="Lewis S.E."/>
        </authorList>
    </citation>
    <scope>GENOME REANNOTATION</scope>
    <source>
        <strain>Berkeley</strain>
    </source>
</reference>
<reference evidence="20" key="4">
    <citation type="journal article" date="2002" name="Genome Biol.">
        <title>A Drosophila full-length cDNA resource.</title>
        <authorList>
            <person name="Stapleton M."/>
            <person name="Carlson J.W."/>
            <person name="Brokstein P."/>
            <person name="Yu C."/>
            <person name="Champe M."/>
            <person name="George R.A."/>
            <person name="Guarin H."/>
            <person name="Kronmiller B."/>
            <person name="Pacleb J.M."/>
            <person name="Park S."/>
            <person name="Wan K.H."/>
            <person name="Rubin G.M."/>
            <person name="Celniker S.E."/>
        </authorList>
    </citation>
    <scope>NUCLEOTIDE SEQUENCE [LARGE SCALE MRNA]</scope>
    <source>
        <strain evidence="20">Berkeley</strain>
        <tissue evidence="3">Embryo</tissue>
    </source>
</reference>
<reference evidence="17" key="5">
    <citation type="journal article" date="2005" name="Dev. Cell">
        <title>Drosophila genome-scale screen for PAN GU kinase substrates identifies Mat89Bb as a cell cycle regulator.</title>
        <authorList>
            <person name="Lee L.A."/>
            <person name="Lee E."/>
            <person name="Anderson M.A."/>
            <person name="Vardy L."/>
            <person name="Tahinci E."/>
            <person name="Ali S.M."/>
            <person name="Kashevsky H."/>
            <person name="Benasutti M."/>
            <person name="Kirschner M.W."/>
            <person name="Orr-Weaver T.L."/>
        </authorList>
    </citation>
    <scope>FUNCTION</scope>
    <scope>PHOSPHORYLATION</scope>
    <scope>DISRUPTION PHENOTYPE</scope>
</reference>
<reference key="6">
    <citation type="journal article" date="2009" name="Mol. Biol. Cell">
        <title>Asunder is a critical regulator of dynein-dynactin localization during Drosophila spermatogenesis.</title>
        <authorList>
            <person name="Anderson M.A."/>
            <person name="Jodoin J.N."/>
            <person name="Lee E."/>
            <person name="Hales K.G."/>
            <person name="Hays T.S."/>
            <person name="Lee L.A."/>
        </authorList>
    </citation>
    <scope>FUNCTION</scope>
    <scope>SUBCELLULAR LOCATION</scope>
</reference>
<reference key="7">
    <citation type="journal article" date="2012" name="RNA">
        <title>An RNAi screen identifies additional members of the Drosophila Integrator complex and a requirement for cyclin C/Cdk8 in snRNA 3'-end formation.</title>
        <authorList>
            <person name="Chen J."/>
            <person name="Ezzeddine N."/>
            <person name="Waltenspiel B."/>
            <person name="Albrecht T.R."/>
            <person name="Warren W.D."/>
            <person name="Marzluff W.F."/>
            <person name="Wagner E.J."/>
        </authorList>
    </citation>
    <scope>FUNCTION</scope>
    <scope>SUBCELLULAR LOCATION</scope>
    <scope>IDENTIFICATION IN THE INTEGRATOR COMPLEX</scope>
</reference>
<reference key="8">
    <citation type="journal article" date="2013" name="Mol. Biol. Cell">
        <title>Nuclear-localized Asunder regulates cytoplasmic dynein localization via its role in the integrator complex.</title>
        <authorList>
            <person name="Jodoin J.N."/>
            <person name="Sitaram P."/>
            <person name="Albrecht T.R."/>
            <person name="May S.B."/>
            <person name="Shboul M."/>
            <person name="Lee E."/>
            <person name="Reversade B."/>
            <person name="Wagner E.J."/>
            <person name="Lee L.A."/>
        </authorList>
    </citation>
    <scope>FUNCTION</scope>
    <scope>SUBCELLULAR LOCATION</scope>
    <scope>DOMAIN</scope>
    <scope>MUTAGENESIS OF 617-LYS--ARG-619</scope>
</reference>
<reference key="9">
    <citation type="journal article" date="2019" name="Genes Dev.">
        <title>The Integrator complex cleaves nascent mRNAs to attenuate transcription.</title>
        <authorList>
            <person name="Tatomer D.C."/>
            <person name="Elrod N.D."/>
            <person name="Liang D."/>
            <person name="Xiao M.S."/>
            <person name="Jiang J.Z."/>
            <person name="Jonathan M."/>
            <person name="Huang K.L."/>
            <person name="Wagner E.J."/>
            <person name="Cherry S."/>
            <person name="Wilusz J.E."/>
        </authorList>
    </citation>
    <scope>IDENTIFICATION IN THE INTEGRATOR COMPLEX</scope>
</reference>
<reference key="10">
    <citation type="journal article" date="2020" name="Mol. Cell">
        <title>Integrator recruits protein phosphatase 2A to prevent pause release and facilitate transcription termination.</title>
        <authorList>
            <person name="Huang K.L."/>
            <person name="Jee D."/>
            <person name="Stein C.B."/>
            <person name="Elrod N.D."/>
            <person name="Henriques T."/>
            <person name="Mascibroda L.G."/>
            <person name="Baillat D."/>
            <person name="Russell W.K."/>
            <person name="Adelman K."/>
            <person name="Wagner E.J."/>
        </authorList>
    </citation>
    <scope>FUNCTION</scope>
    <scope>IDENTIFICATION IN THE INTAC COMPLEX</scope>
</reference>
<reference key="11">
    <citation type="journal article" date="2023" name="Mol. Cell">
        <title>IntS6 and the Integrator phosphatase module tune the efficiency of select premature transcription termination events.</title>
        <authorList>
            <person name="Fujiwara R."/>
            <person name="Zhai S.N."/>
            <person name="Liang D."/>
            <person name="Shah A.P."/>
            <person name="Tracey M."/>
            <person name="Ma X.K."/>
            <person name="Fields C.J."/>
            <person name="Mendoza-Figueroa M.S."/>
            <person name="Meline M.C."/>
            <person name="Tatomer D.C."/>
            <person name="Yang L."/>
            <person name="Wilusz J.E."/>
        </authorList>
    </citation>
    <scope>IDENTIFICATION IN THE INTAC COMPLEX</scope>
</reference>
<reference key="12">
    <citation type="journal article" date="2024" name="Mol. Cell">
        <title>Cytoplasmic binding partners of the Integrator endonuclease INTS11 and its paralog CPSF73 are required for their nuclear function.</title>
        <authorList>
            <person name="Lin M.H."/>
            <person name="Jensen M.K."/>
            <person name="Elrod N.D."/>
            <person name="Chu H.F."/>
            <person name="Haseley M."/>
            <person name="Beam A.C."/>
            <person name="Huang K.L."/>
            <person name="Chiang W."/>
            <person name="Russell W.K."/>
            <person name="Williams K."/>
            <person name="Proschel C."/>
            <person name="Wagner E.J."/>
            <person name="Tong L."/>
        </authorList>
    </citation>
    <scope>IDENTIFICATION IN THE INTEGRATOR COMPLEX</scope>
    <scope>SUBCELLULAR LOCATION</scope>
</reference>